<accession>Q9DBQ7</accession>
<accession>Q3TRA7</accession>
<accession>Q6NY01</accession>
<accession>Q8BQC9</accession>
<accession>Q8BRJ1</accession>
<reference key="1">
    <citation type="journal article" date="2005" name="Science">
        <title>The transcriptional landscape of the mammalian genome.</title>
        <authorList>
            <person name="Carninci P."/>
            <person name="Kasukawa T."/>
            <person name="Katayama S."/>
            <person name="Gough J."/>
            <person name="Frith M.C."/>
            <person name="Maeda N."/>
            <person name="Oyama R."/>
            <person name="Ravasi T."/>
            <person name="Lenhard B."/>
            <person name="Wells C."/>
            <person name="Kodzius R."/>
            <person name="Shimokawa K."/>
            <person name="Bajic V.B."/>
            <person name="Brenner S.E."/>
            <person name="Batalov S."/>
            <person name="Forrest A.R."/>
            <person name="Zavolan M."/>
            <person name="Davis M.J."/>
            <person name="Wilming L.G."/>
            <person name="Aidinis V."/>
            <person name="Allen J.E."/>
            <person name="Ambesi-Impiombato A."/>
            <person name="Apweiler R."/>
            <person name="Aturaliya R.N."/>
            <person name="Bailey T.L."/>
            <person name="Bansal M."/>
            <person name="Baxter L."/>
            <person name="Beisel K.W."/>
            <person name="Bersano T."/>
            <person name="Bono H."/>
            <person name="Chalk A.M."/>
            <person name="Chiu K.P."/>
            <person name="Choudhary V."/>
            <person name="Christoffels A."/>
            <person name="Clutterbuck D.R."/>
            <person name="Crowe M.L."/>
            <person name="Dalla E."/>
            <person name="Dalrymple B.P."/>
            <person name="de Bono B."/>
            <person name="Della Gatta G."/>
            <person name="di Bernardo D."/>
            <person name="Down T."/>
            <person name="Engstrom P."/>
            <person name="Fagiolini M."/>
            <person name="Faulkner G."/>
            <person name="Fletcher C.F."/>
            <person name="Fukushima T."/>
            <person name="Furuno M."/>
            <person name="Futaki S."/>
            <person name="Gariboldi M."/>
            <person name="Georgii-Hemming P."/>
            <person name="Gingeras T.R."/>
            <person name="Gojobori T."/>
            <person name="Green R.E."/>
            <person name="Gustincich S."/>
            <person name="Harbers M."/>
            <person name="Hayashi Y."/>
            <person name="Hensch T.K."/>
            <person name="Hirokawa N."/>
            <person name="Hill D."/>
            <person name="Huminiecki L."/>
            <person name="Iacono M."/>
            <person name="Ikeo K."/>
            <person name="Iwama A."/>
            <person name="Ishikawa T."/>
            <person name="Jakt M."/>
            <person name="Kanapin A."/>
            <person name="Katoh M."/>
            <person name="Kawasawa Y."/>
            <person name="Kelso J."/>
            <person name="Kitamura H."/>
            <person name="Kitano H."/>
            <person name="Kollias G."/>
            <person name="Krishnan S.P."/>
            <person name="Kruger A."/>
            <person name="Kummerfeld S.K."/>
            <person name="Kurochkin I.V."/>
            <person name="Lareau L.F."/>
            <person name="Lazarevic D."/>
            <person name="Lipovich L."/>
            <person name="Liu J."/>
            <person name="Liuni S."/>
            <person name="McWilliam S."/>
            <person name="Madan Babu M."/>
            <person name="Madera M."/>
            <person name="Marchionni L."/>
            <person name="Matsuda H."/>
            <person name="Matsuzawa S."/>
            <person name="Miki H."/>
            <person name="Mignone F."/>
            <person name="Miyake S."/>
            <person name="Morris K."/>
            <person name="Mottagui-Tabar S."/>
            <person name="Mulder N."/>
            <person name="Nakano N."/>
            <person name="Nakauchi H."/>
            <person name="Ng P."/>
            <person name="Nilsson R."/>
            <person name="Nishiguchi S."/>
            <person name="Nishikawa S."/>
            <person name="Nori F."/>
            <person name="Ohara O."/>
            <person name="Okazaki Y."/>
            <person name="Orlando V."/>
            <person name="Pang K.C."/>
            <person name="Pavan W.J."/>
            <person name="Pavesi G."/>
            <person name="Pesole G."/>
            <person name="Petrovsky N."/>
            <person name="Piazza S."/>
            <person name="Reed J."/>
            <person name="Reid J.F."/>
            <person name="Ring B.Z."/>
            <person name="Ringwald M."/>
            <person name="Rost B."/>
            <person name="Ruan Y."/>
            <person name="Salzberg S.L."/>
            <person name="Sandelin A."/>
            <person name="Schneider C."/>
            <person name="Schoenbach C."/>
            <person name="Sekiguchi K."/>
            <person name="Semple C.A."/>
            <person name="Seno S."/>
            <person name="Sessa L."/>
            <person name="Sheng Y."/>
            <person name="Shibata Y."/>
            <person name="Shimada H."/>
            <person name="Shimada K."/>
            <person name="Silva D."/>
            <person name="Sinclair B."/>
            <person name="Sperling S."/>
            <person name="Stupka E."/>
            <person name="Sugiura K."/>
            <person name="Sultana R."/>
            <person name="Takenaka Y."/>
            <person name="Taki K."/>
            <person name="Tammoja K."/>
            <person name="Tan S.L."/>
            <person name="Tang S."/>
            <person name="Taylor M.S."/>
            <person name="Tegner J."/>
            <person name="Teichmann S.A."/>
            <person name="Ueda H.R."/>
            <person name="van Nimwegen E."/>
            <person name="Verardo R."/>
            <person name="Wei C.L."/>
            <person name="Yagi K."/>
            <person name="Yamanishi H."/>
            <person name="Zabarovsky E."/>
            <person name="Zhu S."/>
            <person name="Zimmer A."/>
            <person name="Hide W."/>
            <person name="Bult C."/>
            <person name="Grimmond S.M."/>
            <person name="Teasdale R.D."/>
            <person name="Liu E.T."/>
            <person name="Brusic V."/>
            <person name="Quackenbush J."/>
            <person name="Wahlestedt C."/>
            <person name="Mattick J.S."/>
            <person name="Hume D.A."/>
            <person name="Kai C."/>
            <person name="Sasaki D."/>
            <person name="Tomaru Y."/>
            <person name="Fukuda S."/>
            <person name="Kanamori-Katayama M."/>
            <person name="Suzuki M."/>
            <person name="Aoki J."/>
            <person name="Arakawa T."/>
            <person name="Iida J."/>
            <person name="Imamura K."/>
            <person name="Itoh M."/>
            <person name="Kato T."/>
            <person name="Kawaji H."/>
            <person name="Kawagashira N."/>
            <person name="Kawashima T."/>
            <person name="Kojima M."/>
            <person name="Kondo S."/>
            <person name="Konno H."/>
            <person name="Nakano K."/>
            <person name="Ninomiya N."/>
            <person name="Nishio T."/>
            <person name="Okada M."/>
            <person name="Plessy C."/>
            <person name="Shibata K."/>
            <person name="Shiraki T."/>
            <person name="Suzuki S."/>
            <person name="Tagami M."/>
            <person name="Waki K."/>
            <person name="Watahiki A."/>
            <person name="Okamura-Oho Y."/>
            <person name="Suzuki H."/>
            <person name="Kawai J."/>
            <person name="Hayashizaki Y."/>
        </authorList>
    </citation>
    <scope>NUCLEOTIDE SEQUENCE [LARGE SCALE MRNA] (ISOFORMS 1; 2 AND 3)</scope>
    <source>
        <strain>C57BL/6J</strain>
        <tissue>Brain cortex</tissue>
        <tissue>Embryo</tissue>
        <tissue>Lung</tissue>
        <tissue>Spinal cord</tissue>
    </source>
</reference>
<reference key="2">
    <citation type="journal article" date="2004" name="Genome Res.">
        <title>The status, quality, and expansion of the NIH full-length cDNA project: the Mammalian Gene Collection (MGC).</title>
        <authorList>
            <consortium name="The MGC Project Team"/>
        </authorList>
    </citation>
    <scope>NUCLEOTIDE SEQUENCE [LARGE SCALE MRNA] (ISOFORM 1)</scope>
    <source>
        <strain>C57BL/6J</strain>
        <tissue>Brain</tissue>
        <tissue>Embryo</tissue>
    </source>
</reference>
<reference key="3">
    <citation type="journal article" date="2010" name="Cell">
        <title>A tissue-specific atlas of mouse protein phosphorylation and expression.</title>
        <authorList>
            <person name="Huttlin E.L."/>
            <person name="Jedrychowski M.P."/>
            <person name="Elias J.E."/>
            <person name="Goswami T."/>
            <person name="Rad R."/>
            <person name="Beausoleil S.A."/>
            <person name="Villen J."/>
            <person name="Haas W."/>
            <person name="Sowa M.E."/>
            <person name="Gygi S.P."/>
        </authorList>
    </citation>
    <scope>PHOSPHORYLATION [LARGE SCALE ANALYSIS] AT SER-439</scope>
    <scope>IDENTIFICATION BY MASS SPECTROMETRY [LARGE SCALE ANALYSIS]</scope>
    <source>
        <tissue>Brain</tissue>
        <tissue>Liver</tissue>
        <tissue>Lung</tissue>
        <tissue>Spleen</tissue>
        <tissue>Testis</tissue>
    </source>
</reference>
<dbReference type="EMBL" id="AK004809">
    <property type="protein sequence ID" value="BAB23580.1"/>
    <property type="molecule type" value="mRNA"/>
</dbReference>
<dbReference type="EMBL" id="AK044100">
    <property type="protein sequence ID" value="BAC31777.1"/>
    <property type="status" value="ALT_SEQ"/>
    <property type="molecule type" value="mRNA"/>
</dbReference>
<dbReference type="EMBL" id="AK050999">
    <property type="protein sequence ID" value="BAC34492.1"/>
    <property type="molecule type" value="mRNA"/>
</dbReference>
<dbReference type="EMBL" id="AK162937">
    <property type="protein sequence ID" value="BAE37123.1"/>
    <property type="molecule type" value="mRNA"/>
</dbReference>
<dbReference type="EMBL" id="BC043085">
    <property type="protein sequence ID" value="AAH43085.1"/>
    <property type="molecule type" value="mRNA"/>
</dbReference>
<dbReference type="EMBL" id="BC066800">
    <property type="status" value="NOT_ANNOTATED_CDS"/>
    <property type="molecule type" value="mRNA"/>
</dbReference>
<dbReference type="CCDS" id="CCDS15430.1">
    <molecule id="Q9DBQ7-1"/>
</dbReference>
<dbReference type="CCDS" id="CCDS69967.1">
    <molecule id="Q9DBQ7-3"/>
</dbReference>
<dbReference type="RefSeq" id="NP_001272931.1">
    <molecule id="Q9DBQ7-3"/>
    <property type="nucleotide sequence ID" value="NM_001286002.1"/>
</dbReference>
<dbReference type="RefSeq" id="NP_001272932.1">
    <property type="nucleotide sequence ID" value="NM_001286003.1"/>
</dbReference>
<dbReference type="RefSeq" id="NP_083052.1">
    <molecule id="Q9DBQ7-1"/>
    <property type="nucleotide sequence ID" value="NM_028776.5"/>
</dbReference>
<dbReference type="RefSeq" id="XP_006496912.1">
    <property type="nucleotide sequence ID" value="XM_006496849.1"/>
</dbReference>
<dbReference type="RefSeq" id="XP_017176061.1">
    <property type="nucleotide sequence ID" value="XM_017320572.1"/>
</dbReference>
<dbReference type="SMR" id="Q9DBQ7"/>
<dbReference type="BioGRID" id="232251">
    <property type="interactions" value="1"/>
</dbReference>
<dbReference type="FunCoup" id="Q9DBQ7">
    <property type="interactions" value="3395"/>
</dbReference>
<dbReference type="STRING" id="10090.ENSMUSP00000027876"/>
<dbReference type="iPTMnet" id="Q9DBQ7"/>
<dbReference type="PhosphoSitePlus" id="Q9DBQ7"/>
<dbReference type="jPOST" id="Q9DBQ7"/>
<dbReference type="PaxDb" id="10090-ENSMUSP00000027876"/>
<dbReference type="PeptideAtlas" id="Q9DBQ7"/>
<dbReference type="ProteomicsDB" id="294238">
    <molecule id="Q9DBQ7-1"/>
</dbReference>
<dbReference type="ProteomicsDB" id="294239">
    <molecule id="Q9DBQ7-2"/>
</dbReference>
<dbReference type="ProteomicsDB" id="294240">
    <molecule id="Q9DBQ7-3"/>
</dbReference>
<dbReference type="Pumba" id="Q9DBQ7"/>
<dbReference type="Antibodypedia" id="936">
    <property type="antibodies" value="249 antibodies from 23 providers"/>
</dbReference>
<dbReference type="DNASU" id="240880"/>
<dbReference type="Ensembl" id="ENSMUST00000027876.11">
    <molecule id="Q9DBQ7-1"/>
    <property type="protein sequence ID" value="ENSMUSP00000027876.5"/>
    <property type="gene ID" value="ENSMUSG00000026584.15"/>
</dbReference>
<dbReference type="Ensembl" id="ENSMUST00000161908.8">
    <molecule id="Q9DBQ7-3"/>
    <property type="protein sequence ID" value="ENSMUSP00000125735.2"/>
    <property type="gene ID" value="ENSMUSG00000026584.15"/>
</dbReference>
<dbReference type="Ensembl" id="ENSMUST00000162234.2">
    <molecule id="Q9DBQ7-2"/>
    <property type="protein sequence ID" value="ENSMUSP00000123704.2"/>
    <property type="gene ID" value="ENSMUSG00000026584.15"/>
</dbReference>
<dbReference type="Ensembl" id="ENSMUST00000170359.8">
    <molecule id="Q9DBQ7-3"/>
    <property type="protein sequence ID" value="ENSMUSP00000132109.2"/>
    <property type="gene ID" value="ENSMUSG00000026584.15"/>
</dbReference>
<dbReference type="GeneID" id="240880"/>
<dbReference type="KEGG" id="mmu:240880"/>
<dbReference type="UCSC" id="uc007dhq.2">
    <molecule id="Q9DBQ7-1"/>
    <property type="organism name" value="mouse"/>
</dbReference>
<dbReference type="UCSC" id="uc011wuu.1">
    <molecule id="Q9DBQ7-3"/>
    <property type="organism name" value="mouse"/>
</dbReference>
<dbReference type="AGR" id="MGI:1921385"/>
<dbReference type="CTD" id="57147"/>
<dbReference type="MGI" id="MGI:1921385">
    <property type="gene designation" value="Scyl3"/>
</dbReference>
<dbReference type="VEuPathDB" id="HostDB:ENSMUSG00000026584"/>
<dbReference type="eggNOG" id="KOG1243">
    <property type="taxonomic scope" value="Eukaryota"/>
</dbReference>
<dbReference type="GeneTree" id="ENSGT00930000151043"/>
<dbReference type="HOGENOM" id="CLU_015864_0_0_1"/>
<dbReference type="InParanoid" id="Q9DBQ7"/>
<dbReference type="OMA" id="HDPELDW"/>
<dbReference type="OrthoDB" id="9942861at2759"/>
<dbReference type="PhylomeDB" id="Q9DBQ7"/>
<dbReference type="TreeFam" id="TF313435"/>
<dbReference type="BioGRID-ORCS" id="240880">
    <property type="hits" value="0 hits in 78 CRISPR screens"/>
</dbReference>
<dbReference type="ChiTaRS" id="Scyl3">
    <property type="organism name" value="mouse"/>
</dbReference>
<dbReference type="PRO" id="PR:Q9DBQ7"/>
<dbReference type="Proteomes" id="UP000000589">
    <property type="component" value="Chromosome 1"/>
</dbReference>
<dbReference type="RNAct" id="Q9DBQ7">
    <property type="molecule type" value="protein"/>
</dbReference>
<dbReference type="Bgee" id="ENSMUSG00000026584">
    <property type="expression patterns" value="Expressed in superior cervical ganglion and 231 other cell types or tissues"/>
</dbReference>
<dbReference type="ExpressionAtlas" id="Q9DBQ7">
    <property type="expression patterns" value="baseline and differential"/>
</dbReference>
<dbReference type="GO" id="GO:0005829">
    <property type="term" value="C:cytosol"/>
    <property type="evidence" value="ECO:0007669"/>
    <property type="project" value="Ensembl"/>
</dbReference>
<dbReference type="GO" id="GO:0005783">
    <property type="term" value="C:endoplasmic reticulum"/>
    <property type="evidence" value="ECO:0007669"/>
    <property type="project" value="Ensembl"/>
</dbReference>
<dbReference type="GO" id="GO:0005794">
    <property type="term" value="C:Golgi apparatus"/>
    <property type="evidence" value="ECO:0000314"/>
    <property type="project" value="MGI"/>
</dbReference>
<dbReference type="GO" id="GO:0000139">
    <property type="term" value="C:Golgi membrane"/>
    <property type="evidence" value="ECO:0000314"/>
    <property type="project" value="MGI"/>
</dbReference>
<dbReference type="GO" id="GO:0030027">
    <property type="term" value="C:lamellipodium"/>
    <property type="evidence" value="ECO:0007669"/>
    <property type="project" value="UniProtKB-SubCell"/>
</dbReference>
<dbReference type="GO" id="GO:0005524">
    <property type="term" value="F:ATP binding"/>
    <property type="evidence" value="ECO:0007669"/>
    <property type="project" value="InterPro"/>
</dbReference>
<dbReference type="GO" id="GO:0042802">
    <property type="term" value="F:identical protein binding"/>
    <property type="evidence" value="ECO:0000353"/>
    <property type="project" value="MGI"/>
</dbReference>
<dbReference type="GO" id="GO:0004672">
    <property type="term" value="F:protein kinase activity"/>
    <property type="evidence" value="ECO:0007669"/>
    <property type="project" value="InterPro"/>
</dbReference>
<dbReference type="GO" id="GO:0006954">
    <property type="term" value="P:inflammatory response"/>
    <property type="evidence" value="ECO:0000316"/>
    <property type="project" value="MGI"/>
</dbReference>
<dbReference type="GO" id="GO:0048666">
    <property type="term" value="P:neuron development"/>
    <property type="evidence" value="ECO:0000316"/>
    <property type="project" value="MGI"/>
</dbReference>
<dbReference type="GO" id="GO:0008104">
    <property type="term" value="P:protein localization"/>
    <property type="evidence" value="ECO:0000316"/>
    <property type="project" value="MGI"/>
</dbReference>
<dbReference type="GO" id="GO:0021522">
    <property type="term" value="P:spinal cord motor neuron differentiation"/>
    <property type="evidence" value="ECO:0000316"/>
    <property type="project" value="MGI"/>
</dbReference>
<dbReference type="FunFam" id="1.25.10.10:FF:000359">
    <property type="entry name" value="Protein-associating with the carboxyl-terminal domain of ezrin"/>
    <property type="match status" value="1"/>
</dbReference>
<dbReference type="FunFam" id="3.30.200.20:FF:000298">
    <property type="entry name" value="Protein-associating with the carboxyl-terminal domain of ezrin"/>
    <property type="match status" value="1"/>
</dbReference>
<dbReference type="Gene3D" id="1.25.10.10">
    <property type="entry name" value="Leucine-rich Repeat Variant"/>
    <property type="match status" value="1"/>
</dbReference>
<dbReference type="Gene3D" id="3.30.200.20">
    <property type="entry name" value="Phosphorylase Kinase, domain 1"/>
    <property type="match status" value="1"/>
</dbReference>
<dbReference type="Gene3D" id="1.10.510.10">
    <property type="entry name" value="Transferase(Phosphotransferase) domain 1"/>
    <property type="match status" value="1"/>
</dbReference>
<dbReference type="InterPro" id="IPR011989">
    <property type="entry name" value="ARM-like"/>
</dbReference>
<dbReference type="InterPro" id="IPR016024">
    <property type="entry name" value="ARM-type_fold"/>
</dbReference>
<dbReference type="InterPro" id="IPR051177">
    <property type="entry name" value="CIK-Related_Protein"/>
</dbReference>
<dbReference type="InterPro" id="IPR011009">
    <property type="entry name" value="Kinase-like_dom_sf"/>
</dbReference>
<dbReference type="InterPro" id="IPR000719">
    <property type="entry name" value="Prot_kinase_dom"/>
</dbReference>
<dbReference type="PANTHER" id="PTHR12984:SF15">
    <property type="entry name" value="PROTEIN-ASSOCIATING WITH THE CARBOXYL-TERMINAL DOMAIN OF EZRIN"/>
    <property type="match status" value="1"/>
</dbReference>
<dbReference type="PANTHER" id="PTHR12984">
    <property type="entry name" value="SCY1-RELATED S/T PROTEIN KINASE-LIKE"/>
    <property type="match status" value="1"/>
</dbReference>
<dbReference type="SMART" id="SM00220">
    <property type="entry name" value="S_TKc"/>
    <property type="match status" value="1"/>
</dbReference>
<dbReference type="SUPFAM" id="SSF48371">
    <property type="entry name" value="ARM repeat"/>
    <property type="match status" value="1"/>
</dbReference>
<dbReference type="SUPFAM" id="SSF56112">
    <property type="entry name" value="Protein kinase-like (PK-like)"/>
    <property type="match status" value="1"/>
</dbReference>
<dbReference type="PROSITE" id="PS50011">
    <property type="entry name" value="PROTEIN_KINASE_DOM"/>
    <property type="match status" value="1"/>
</dbReference>
<proteinExistence type="evidence at protein level"/>
<name>PACE1_MOUSE</name>
<sequence length="735" mass="81333">MGSENSALKSYTLRESPFTLPSGLAVYPAILQDGKCASVFVYKRENEDKVNKAAKHLKTLRHPCLLRFLSCTVEADGIHLVTERVQPLEVALETLSPAEVCAGIYDILLALIFLHDRGHLTHNNVCLSSVFVSEDGHWKLGGMETVCQVPQATPEFLRNIQSVRDPASIPPEEMSPEFSGLPESHGHARDAYAFGALVDSLLPIFNEQVSADVLSSFLQILHSALLNPMPECRPALSTLLSHDFFRNDFLEVVNFLKSLTLKSEDEKTEFFKFLLDRVSCLSEELIASRLVPLLLNQLVFAEPVAVKSFLPYLLGPKKENAPGETPCLLSPALFQSRVIPVLLRLFEVHEEHVRMVLLSHIEAYVEHFTQEQLKKVILPQVLLGLRDTSNSIVAITLRSLAVLVSLLGPEVVVGGERTKIFKRTAPSFTKTSDLSPEGSPMHVVCSQQSRVSKVLEDPSSNVFPKWLSGNVPSSSRKRIQEECYSSLSQTGDQFSHTIKFPMNGLSDVKNTSEDNGSFPAGSNKPEEWPDWSEPEEPEQQPASIHRWPREPCDVAESQHTNLTAEEVTWDDGEASFGTEINSTATASAPVPVTSGGQSTSAALVPLTEESKPLQSSPSSKTSHRQHEEVKPPQVSQERPLKAPSGLGLGEEFTIQVKKKPVQDPELDWFADMIPEIKPSGTFLILPELRTEVMVPDKDNVSSLMQFSSKFAATEMTEGEAEGWEGEELAWEDNNW</sequence>
<keyword id="KW-0025">Alternative splicing</keyword>
<keyword id="KW-0966">Cell projection</keyword>
<keyword id="KW-0963">Cytoplasm</keyword>
<keyword id="KW-0333">Golgi apparatus</keyword>
<keyword id="KW-0449">Lipoprotein</keyword>
<keyword id="KW-0519">Myristate</keyword>
<keyword id="KW-0597">Phosphoprotein</keyword>
<keyword id="KW-1185">Reference proteome</keyword>
<keyword id="KW-0677">Repeat</keyword>
<gene>
    <name type="primary">Scyl3</name>
    <name type="synonym">Pace1</name>
</gene>
<organism>
    <name type="scientific">Mus musculus</name>
    <name type="common">Mouse</name>
    <dbReference type="NCBI Taxonomy" id="10090"/>
    <lineage>
        <taxon>Eukaryota</taxon>
        <taxon>Metazoa</taxon>
        <taxon>Chordata</taxon>
        <taxon>Craniata</taxon>
        <taxon>Vertebrata</taxon>
        <taxon>Euteleostomi</taxon>
        <taxon>Mammalia</taxon>
        <taxon>Eutheria</taxon>
        <taxon>Euarchontoglires</taxon>
        <taxon>Glires</taxon>
        <taxon>Rodentia</taxon>
        <taxon>Myomorpha</taxon>
        <taxon>Muroidea</taxon>
        <taxon>Muridae</taxon>
        <taxon>Murinae</taxon>
        <taxon>Mus</taxon>
        <taxon>Mus</taxon>
    </lineage>
</organism>
<evidence type="ECO:0000250" key="1"/>
<evidence type="ECO:0000250" key="2">
    <source>
        <dbReference type="UniProtKB" id="Q8IZE3"/>
    </source>
</evidence>
<evidence type="ECO:0000255" key="3">
    <source>
        <dbReference type="PROSITE-ProRule" id="PRU00159"/>
    </source>
</evidence>
<evidence type="ECO:0000256" key="4">
    <source>
        <dbReference type="SAM" id="MobiDB-lite"/>
    </source>
</evidence>
<evidence type="ECO:0000303" key="5">
    <source>
    </source>
</evidence>
<evidence type="ECO:0000305" key="6"/>
<evidence type="ECO:0007744" key="7">
    <source>
    </source>
</evidence>
<comment type="function">
    <text>May play a role in regulating cell adhesion/migration complexes in migrating cells.</text>
</comment>
<comment type="subunit">
    <text evidence="1">Interacts with EZR/VIL2 C-terminal domain.</text>
</comment>
<comment type="subcellular location">
    <subcellularLocation>
        <location evidence="1">Cytoplasm</location>
    </subcellularLocation>
    <subcellularLocation>
        <location evidence="1">Golgi apparatus</location>
    </subcellularLocation>
    <subcellularLocation>
        <location evidence="1">Cell projection</location>
        <location evidence="1">Lamellipodium</location>
    </subcellularLocation>
    <text evidence="1">Colocalized with EZR/VIL2, actin and CD44 in lamellipodia.</text>
</comment>
<comment type="alternative products">
    <event type="alternative splicing"/>
    <isoform>
        <id>Q9DBQ7-1</id>
        <name>1</name>
        <sequence type="displayed"/>
    </isoform>
    <isoform>
        <id>Q9DBQ7-2</id>
        <name>2</name>
        <sequence type="described" ref="VSP_037985 VSP_013126"/>
    </isoform>
    <isoform>
        <id>Q9DBQ7-3</id>
        <name>3</name>
        <sequence type="described" ref="VSP_027369"/>
    </isoform>
</comment>
<comment type="domain">
    <text>The protein kinase domain is predicted to be catalytically inactive.</text>
</comment>
<comment type="PTM">
    <text evidence="1">May be myristoylated; myristoylation may target it to Golgi compartment.</text>
</comment>
<comment type="miscellaneous">
    <molecule>Isoform 2</molecule>
    <text evidence="6">May be produced at very low levels due to a premature stop codon in the mRNA, leading to nonsense-mediated mRNA decay.</text>
</comment>
<comment type="similarity">
    <text evidence="6">Belongs to the protein kinase superfamily.</text>
</comment>
<comment type="sequence caution" evidence="6">
    <conflict type="erroneous translation">
        <sequence resource="EMBL-CDS" id="BAC31777"/>
    </conflict>
    <text>Wrong choice of CDS.</text>
</comment>
<comment type="sequence caution" evidence="6">
    <conflict type="erroneous termination">
        <sequence resource="EMBL" id="BC066800"/>
    </conflict>
    <text>Truncated C-terminus.</text>
</comment>
<protein>
    <recommendedName>
        <fullName>Protein-associating with the carboxyl-terminal domain of ezrin</fullName>
    </recommendedName>
    <alternativeName>
        <fullName>Ezrin-binding protein PACE-1</fullName>
    </alternativeName>
    <alternativeName>
        <fullName>SCY1-like protein 3</fullName>
    </alternativeName>
</protein>
<feature type="initiator methionine" description="Removed">
    <location>
        <position position="1"/>
    </location>
</feature>
<feature type="chain" id="PRO_0000058168" description="Protein-associating with the carboxyl-terminal domain of ezrin">
    <location>
        <begin position="2"/>
        <end position="735"/>
    </location>
</feature>
<feature type="domain" description="Protein kinase" evidence="3">
    <location>
        <begin position="2"/>
        <end position="245"/>
    </location>
</feature>
<feature type="repeat" description="HEAT 1">
    <location>
        <begin position="194"/>
        <end position="249"/>
    </location>
</feature>
<feature type="repeat" description="HEAT 2">
    <location>
        <begin position="285"/>
        <end position="323"/>
    </location>
</feature>
<feature type="repeat" description="HEAT 3">
    <location>
        <begin position="333"/>
        <end position="370"/>
    </location>
</feature>
<feature type="repeat" description="HEAT 4">
    <location>
        <begin position="372"/>
        <end position="409"/>
    </location>
</feature>
<feature type="region of interest" description="Disordered" evidence="4">
    <location>
        <begin position="505"/>
        <end position="545"/>
    </location>
</feature>
<feature type="region of interest" description="Interaction with EZR" evidence="1">
    <location>
        <begin position="547"/>
        <end position="735"/>
    </location>
</feature>
<feature type="region of interest" description="Disordered" evidence="4">
    <location>
        <begin position="604"/>
        <end position="648"/>
    </location>
</feature>
<feature type="compositionally biased region" description="Acidic residues" evidence="4">
    <location>
        <begin position="528"/>
        <end position="538"/>
    </location>
</feature>
<feature type="modified residue" description="Phosphoserine" evidence="7">
    <location>
        <position position="439"/>
    </location>
</feature>
<feature type="modified residue" description="Phosphoserine" evidence="2">
    <location>
        <position position="701"/>
    </location>
</feature>
<feature type="lipid moiety-binding region" description="N-myristoyl glycine" evidence="1">
    <location>
        <position position="2"/>
    </location>
</feature>
<feature type="splice variant" id="VSP_037985" description="In isoform 2." evidence="5">
    <original>HLKTLRHPCLLRFLSCTVEADGIHLVTERVQPLEVALETLSPAE</original>
    <variation>MAFTSSLRECSLWKWPWKPCLLQKSVLESMTYCWLLSSFMTEDI</variation>
    <location>
        <begin position="56"/>
        <end position="99"/>
    </location>
</feature>
<feature type="splice variant" id="VSP_013126" description="In isoform 2." evidence="5">
    <location>
        <begin position="100"/>
        <end position="735"/>
    </location>
</feature>
<feature type="splice variant" id="VSP_027369" description="In isoform 3." evidence="5">
    <location>
        <begin position="319"/>
        <end position="331"/>
    </location>
</feature>
<feature type="sequence conflict" description="In Ref. 1; BAE37123." evidence="6" ref="1">
    <original>E</original>
    <variation>Q</variation>
    <location>
        <position position="93"/>
    </location>
</feature>
<feature type="sequence conflict" description="In Ref. 2; BC066800." evidence="6" ref="2">
    <original>L</original>
    <variation>Q</variation>
    <location>
        <position position="226"/>
    </location>
</feature>